<dbReference type="EMBL" id="CP001139">
    <property type="protein sequence ID" value="ACH64889.1"/>
    <property type="molecule type" value="Genomic_DNA"/>
</dbReference>
<dbReference type="RefSeq" id="WP_005417224.1">
    <property type="nucleotide sequence ID" value="NC_011184.1"/>
</dbReference>
<dbReference type="SMR" id="B5FG09"/>
<dbReference type="GeneID" id="54162858"/>
<dbReference type="KEGG" id="vfm:VFMJ11_0225"/>
<dbReference type="HOGENOM" id="CLU_044142_4_1_6"/>
<dbReference type="Proteomes" id="UP000001857">
    <property type="component" value="Chromosome I"/>
</dbReference>
<dbReference type="GO" id="GO:0022625">
    <property type="term" value="C:cytosolic large ribosomal subunit"/>
    <property type="evidence" value="ECO:0007669"/>
    <property type="project" value="TreeGrafter"/>
</dbReference>
<dbReference type="GO" id="GO:0019843">
    <property type="term" value="F:rRNA binding"/>
    <property type="evidence" value="ECO:0007669"/>
    <property type="project" value="UniProtKB-UniRule"/>
</dbReference>
<dbReference type="GO" id="GO:0003735">
    <property type="term" value="F:structural constituent of ribosome"/>
    <property type="evidence" value="ECO:0007669"/>
    <property type="project" value="InterPro"/>
</dbReference>
<dbReference type="GO" id="GO:0006412">
    <property type="term" value="P:translation"/>
    <property type="evidence" value="ECO:0007669"/>
    <property type="project" value="UniProtKB-UniRule"/>
</dbReference>
<dbReference type="FunFam" id="2.40.30.10:FF:000004">
    <property type="entry name" value="50S ribosomal protein L3"/>
    <property type="match status" value="1"/>
</dbReference>
<dbReference type="FunFam" id="3.30.160.810:FF:000001">
    <property type="entry name" value="50S ribosomal protein L3"/>
    <property type="match status" value="1"/>
</dbReference>
<dbReference type="Gene3D" id="3.30.160.810">
    <property type="match status" value="1"/>
</dbReference>
<dbReference type="Gene3D" id="2.40.30.10">
    <property type="entry name" value="Translation factors"/>
    <property type="match status" value="1"/>
</dbReference>
<dbReference type="HAMAP" id="MF_01325_B">
    <property type="entry name" value="Ribosomal_uL3_B"/>
    <property type="match status" value="1"/>
</dbReference>
<dbReference type="InterPro" id="IPR000597">
    <property type="entry name" value="Ribosomal_uL3"/>
</dbReference>
<dbReference type="InterPro" id="IPR019927">
    <property type="entry name" value="Ribosomal_uL3_bac/org-type"/>
</dbReference>
<dbReference type="InterPro" id="IPR019926">
    <property type="entry name" value="Ribosomal_uL3_CS"/>
</dbReference>
<dbReference type="InterPro" id="IPR009000">
    <property type="entry name" value="Transl_B-barrel_sf"/>
</dbReference>
<dbReference type="NCBIfam" id="TIGR03625">
    <property type="entry name" value="L3_bact"/>
    <property type="match status" value="1"/>
</dbReference>
<dbReference type="PANTHER" id="PTHR11229">
    <property type="entry name" value="50S RIBOSOMAL PROTEIN L3"/>
    <property type="match status" value="1"/>
</dbReference>
<dbReference type="PANTHER" id="PTHR11229:SF16">
    <property type="entry name" value="LARGE RIBOSOMAL SUBUNIT PROTEIN UL3C"/>
    <property type="match status" value="1"/>
</dbReference>
<dbReference type="Pfam" id="PF00297">
    <property type="entry name" value="Ribosomal_L3"/>
    <property type="match status" value="1"/>
</dbReference>
<dbReference type="SUPFAM" id="SSF50447">
    <property type="entry name" value="Translation proteins"/>
    <property type="match status" value="1"/>
</dbReference>
<dbReference type="PROSITE" id="PS00474">
    <property type="entry name" value="RIBOSOMAL_L3"/>
    <property type="match status" value="1"/>
</dbReference>
<organism>
    <name type="scientific">Aliivibrio fischeri (strain MJ11)</name>
    <name type="common">Vibrio fischeri</name>
    <dbReference type="NCBI Taxonomy" id="388396"/>
    <lineage>
        <taxon>Bacteria</taxon>
        <taxon>Pseudomonadati</taxon>
        <taxon>Pseudomonadota</taxon>
        <taxon>Gammaproteobacteria</taxon>
        <taxon>Vibrionales</taxon>
        <taxon>Vibrionaceae</taxon>
        <taxon>Aliivibrio</taxon>
    </lineage>
</organism>
<accession>B5FG09</accession>
<feature type="chain" id="PRO_1000141941" description="Large ribosomal subunit protein uL3">
    <location>
        <begin position="1"/>
        <end position="209"/>
    </location>
</feature>
<feature type="modified residue" description="N5-methylglutamine" evidence="1">
    <location>
        <position position="150"/>
    </location>
</feature>
<evidence type="ECO:0000255" key="1">
    <source>
        <dbReference type="HAMAP-Rule" id="MF_01325"/>
    </source>
</evidence>
<evidence type="ECO:0000305" key="2"/>
<keyword id="KW-0488">Methylation</keyword>
<keyword id="KW-0687">Ribonucleoprotein</keyword>
<keyword id="KW-0689">Ribosomal protein</keyword>
<keyword id="KW-0694">RNA-binding</keyword>
<keyword id="KW-0699">rRNA-binding</keyword>
<reference key="1">
    <citation type="submission" date="2008-08" db="EMBL/GenBank/DDBJ databases">
        <title>Complete sequence of Vibrio fischeri strain MJ11.</title>
        <authorList>
            <person name="Mandel M.J."/>
            <person name="Stabb E.V."/>
            <person name="Ruby E.G."/>
            <person name="Ferriera S."/>
            <person name="Johnson J."/>
            <person name="Kravitz S."/>
            <person name="Beeson K."/>
            <person name="Sutton G."/>
            <person name="Rogers Y.-H."/>
            <person name="Friedman R."/>
            <person name="Frazier M."/>
            <person name="Venter J.C."/>
        </authorList>
    </citation>
    <scope>NUCLEOTIDE SEQUENCE [LARGE SCALE GENOMIC DNA]</scope>
    <source>
        <strain>MJ11</strain>
    </source>
</reference>
<protein>
    <recommendedName>
        <fullName evidence="1">Large ribosomal subunit protein uL3</fullName>
    </recommendedName>
    <alternativeName>
        <fullName evidence="2">50S ribosomal protein L3</fullName>
    </alternativeName>
</protein>
<comment type="function">
    <text evidence="1">One of the primary rRNA binding proteins, it binds directly near the 3'-end of the 23S rRNA, where it nucleates assembly of the 50S subunit.</text>
</comment>
<comment type="subunit">
    <text evidence="1">Part of the 50S ribosomal subunit. Forms a cluster with proteins L14 and L19.</text>
</comment>
<comment type="PTM">
    <text evidence="1">Methylated by PrmB.</text>
</comment>
<comment type="similarity">
    <text evidence="1">Belongs to the universal ribosomal protein uL3 family.</text>
</comment>
<gene>
    <name evidence="1" type="primary">rplC</name>
    <name type="ordered locus">VFMJ11_0225</name>
</gene>
<name>RL3_ALIFM</name>
<proteinExistence type="inferred from homology"/>
<sequence length="209" mass="22390">MIGLVGRKVGMTRIFTEEGVSIPVTVVEVEANRVSQVKTVETDGYNAIQVTCGSKKANRVSKPEAGHFAKAGVEAGRGLWEFRLENGEEFAVGAELTVEVFNEIKKVDVTGTSKGKGFQGAVKRWNFRTQDMTHGNSLSHRAPGSIGQCQTPGRVFKGKKMAGHMGAERVTTQNLEIVRVDAERNLLLIKGAVPGSTGGNVIVKPAVKA</sequence>